<proteinExistence type="evidence at protein level"/>
<name>DIRK1_BUTOC</name>
<sequence>IDCSKVNLTAECSS</sequence>
<accession>P0DQU9</accession>
<comment type="function">
    <text evidence="1 3">Venom peptide that completely reduces melanoma (IGR39) cell proliferation at 2 uM dose and reduces more than 90% for glioma (U87) cells (PubMed:29366787). Also reduces melanoma and glioma cell migration and strongly inhibits angiogenesis (PubMed:29366787). May act by binding to integrins (Probable).</text>
</comment>
<comment type="subcellular location">
    <subcellularLocation>
        <location evidence="1">Secreted</location>
    </subcellularLocation>
</comment>
<comment type="tissue specificity">
    <text evidence="4">Expressed by the venom gland.</text>
</comment>
<comment type="mass spectrometry">
    <text>Average mass.</text>
</comment>
<comment type="miscellaneous">
    <text evidence="1">Negative results: has no toxicity on mice (ICV injection) and tumor cell lines.</text>
</comment>
<comment type="similarity">
    <text evidence="3">Belongs to the disintegrin-like family.</text>
</comment>
<dbReference type="GO" id="GO:0005576">
    <property type="term" value="C:extracellular region"/>
    <property type="evidence" value="ECO:0007669"/>
    <property type="project" value="UniProtKB-SubCell"/>
</dbReference>
<dbReference type="GO" id="GO:0090729">
    <property type="term" value="F:toxin activity"/>
    <property type="evidence" value="ECO:0007669"/>
    <property type="project" value="UniProtKB-KW"/>
</dbReference>
<keyword id="KW-1217">Cell adhesion impairing toxin</keyword>
<keyword id="KW-0903">Direct protein sequencing</keyword>
<keyword id="KW-1015">Disulfide bond</keyword>
<keyword id="KW-0964">Secreted</keyword>
<keyword id="KW-0800">Toxin</keyword>
<protein>
    <recommendedName>
        <fullName evidence="2">RK1 peptide</fullName>
    </recommendedName>
    <alternativeName>
        <fullName>Disintegrin-like peptide</fullName>
    </alternativeName>
</protein>
<feature type="peptide" id="PRO_0000455819" description="RK1 peptide" evidence="1">
    <location>
        <begin position="1"/>
        <end position="14"/>
    </location>
</feature>
<feature type="disulfide bond" evidence="4">
    <location>
        <begin position="3"/>
        <end position="12"/>
    </location>
</feature>
<organism>
    <name type="scientific">Buthus occitanus tunetanus</name>
    <name type="common">Common European scorpion</name>
    <name type="synonym">Buthus tunetanus</name>
    <dbReference type="NCBI Taxonomy" id="6871"/>
    <lineage>
        <taxon>Eukaryota</taxon>
        <taxon>Metazoa</taxon>
        <taxon>Ecdysozoa</taxon>
        <taxon>Arthropoda</taxon>
        <taxon>Chelicerata</taxon>
        <taxon>Arachnida</taxon>
        <taxon>Scorpiones</taxon>
        <taxon>Buthida</taxon>
        <taxon>Buthoidea</taxon>
        <taxon>Buthidae</taxon>
        <taxon>Buthus</taxon>
    </lineage>
</organism>
<reference key="1">
    <citation type="journal article" date="2018" name="Biochem. Biophys. Res. Commun.">
        <title>RK1, the first very short peptide from Buthus occitanus tunetanus inhibits tumor cell migration, proliferation and angiogenesis.</title>
        <authorList>
            <person name="Khamessi O."/>
            <person name="Ben Mabrouk H."/>
            <person name="ElFessi-Magouri R."/>
            <person name="Kharrat R."/>
        </authorList>
    </citation>
    <scope>PROTEIN SEQUENCE</scope>
    <scope>FUNCTION</scope>
    <scope>SYNTHESIS</scope>
    <scope>SUBCELLULAR LOCATION</scope>
    <scope>MASS SPECTROMETRY</scope>
    <source>
        <tissue>Venom</tissue>
    </source>
</reference>
<evidence type="ECO:0000269" key="1">
    <source>
    </source>
</evidence>
<evidence type="ECO:0000303" key="2">
    <source>
    </source>
</evidence>
<evidence type="ECO:0000305" key="3"/>
<evidence type="ECO:0000305" key="4">
    <source>
    </source>
</evidence>